<dbReference type="EMBL" id="D13411">
    <property type="protein sequence ID" value="BAA02677.1"/>
    <property type="molecule type" value="Genomic_RNA"/>
</dbReference>
<dbReference type="PIR" id="JQ1309">
    <property type="entry name" value="MNXRRG"/>
</dbReference>
<dbReference type="RefSeq" id="YP_001111367.1">
    <property type="nucleotide sequence ID" value="NC_009242.1"/>
</dbReference>
<dbReference type="GeneID" id="5075720"/>
<dbReference type="KEGG" id="vg:5075720"/>
<dbReference type="OrthoDB" id="23681at10239"/>
<dbReference type="Proteomes" id="UP000006720">
    <property type="component" value="Genome"/>
</dbReference>
<dbReference type="GO" id="GO:0030430">
    <property type="term" value="C:host cell cytoplasm"/>
    <property type="evidence" value="ECO:0007669"/>
    <property type="project" value="UniProtKB-SubCell"/>
</dbReference>
<dbReference type="GO" id="GO:0039624">
    <property type="term" value="C:viral outer capsid"/>
    <property type="evidence" value="ECO:0007669"/>
    <property type="project" value="UniProtKB-KW"/>
</dbReference>
<dbReference type="InterPro" id="IPR008776">
    <property type="entry name" value="Phyto_Pns9_10"/>
</dbReference>
<dbReference type="Pfam" id="PF05878">
    <property type="entry name" value="Phyto_Pns9_10"/>
    <property type="match status" value="1"/>
</dbReference>
<protein>
    <recommendedName>
        <fullName>Minor outer capsid protein P9</fullName>
    </recommendedName>
    <alternativeName>
        <fullName>Protein Pns10</fullName>
    </alternativeName>
</protein>
<evidence type="ECO:0000250" key="1"/>
<evidence type="ECO:0000256" key="2">
    <source>
        <dbReference type="SAM" id="MobiDB-lite"/>
    </source>
</evidence>
<evidence type="ECO:0000305" key="3"/>
<proteinExistence type="inferred from homology"/>
<organism>
    <name type="scientific">Rice gall dwarf virus</name>
    <name type="common">RGDV</name>
    <dbReference type="NCBI Taxonomy" id="10986"/>
    <lineage>
        <taxon>Viruses</taxon>
        <taxon>Riboviria</taxon>
        <taxon>Orthornavirae</taxon>
        <taxon>Duplornaviricota</taxon>
        <taxon>Resentoviricetes</taxon>
        <taxon>Reovirales</taxon>
        <taxon>Sedoreoviridae</taxon>
        <taxon>Phytoreovirus</taxon>
    </lineage>
</organism>
<feature type="chain" id="PRO_0000222771" description="Minor outer capsid protein P9">
    <location>
        <begin position="1"/>
        <end position="320"/>
    </location>
</feature>
<feature type="region of interest" description="Disordered" evidence="2">
    <location>
        <begin position="297"/>
        <end position="320"/>
    </location>
</feature>
<accession>P29078</accession>
<name>P9_RGDV</name>
<reference key="1">
    <citation type="journal article" date="1991" name="J. Gen. Virol.">
        <title>Nucleotide sequences of genome segments S8, encoding a capsid protein, and S10, encoding a 36K protein, of rice gall dwarf virus.</title>
        <authorList>
            <person name="Noda H."/>
            <person name="Ishikawa K."/>
            <person name="Hibino H."/>
            <person name="Kato H."/>
            <person name="Omura T."/>
        </authorList>
    </citation>
    <scope>NUCLEOTIDE SEQUENCE [GENOMIC RNA]</scope>
</reference>
<keyword id="KW-0167">Capsid protein</keyword>
<keyword id="KW-1035">Host cytoplasm</keyword>
<keyword id="KW-1152">Outer capsid protein</keyword>
<keyword id="KW-1185">Reference proteome</keyword>
<keyword id="KW-0946">Virion</keyword>
<comment type="function">
    <text evidence="1">Minor outer capsid protein.</text>
</comment>
<comment type="subcellular location">
    <subcellularLocation>
        <location evidence="3">Virion</location>
    </subcellularLocation>
    <subcellularLocation>
        <location evidence="1">Host cytoplasm</location>
    </subcellularLocation>
    <text evidence="1">Found in the peripheral regions of spherical cytoplasmic structures, called virus factories, that appear early after infection and are the site of viral replication and packaging.</text>
</comment>
<comment type="similarity">
    <text evidence="3">Belongs to the phytoreovirus minor outer capsid protein P9 family.</text>
</comment>
<sequence>MAGKLQDGVAIAKIKETINLFCEYSFGDLVNNRREIVGRVHDARKNAALAWPDLIMNCFLHSASHYGVVKFLLDIALSTRFGDFTLLGVSSQNYPFYDLHVVMTKAFCNLDFAKDEYLMINDSFSSMMSAFLDEEGVHSAMSMELGIHDIEDRFVLRTKRLFYIIHEYHMSLDEIEPWLEKLPDASGGTLLNQKSKEQMRVIFSNAKVRIANSINLYVTTHTNSYNEYVREVAEYVADLWNIQTTTNTQGHENELAAEDFGVLASSSQMNGTKSELGDSVIKSDGNEVKLEPAMFTRNDDEEELAGSEFTSLLSDDGRMG</sequence>
<organismHost>
    <name type="scientific">Nephotettix cincticeps</name>
    <name type="common">Green rice leafhopper</name>
    <name type="synonym">Selenocephalus cincticeps</name>
    <dbReference type="NCBI Taxonomy" id="94400"/>
</organismHost>
<organismHost>
    <name type="scientific">Oryza sativa</name>
    <name type="common">Rice</name>
    <dbReference type="NCBI Taxonomy" id="4530"/>
</organismHost>